<feature type="chain" id="PRO_0000061299" description="Cytochrome b">
    <location>
        <begin position="1"/>
        <end position="379"/>
    </location>
</feature>
<feature type="transmembrane region" description="Helical" evidence="2">
    <location>
        <begin position="33"/>
        <end position="53"/>
    </location>
</feature>
<feature type="transmembrane region" description="Helical" evidence="2">
    <location>
        <begin position="77"/>
        <end position="98"/>
    </location>
</feature>
<feature type="transmembrane region" description="Helical" evidence="2">
    <location>
        <begin position="113"/>
        <end position="133"/>
    </location>
</feature>
<feature type="transmembrane region" description="Helical" evidence="2">
    <location>
        <begin position="178"/>
        <end position="198"/>
    </location>
</feature>
<feature type="transmembrane region" description="Helical" evidence="2">
    <location>
        <begin position="226"/>
        <end position="246"/>
    </location>
</feature>
<feature type="transmembrane region" description="Helical" evidence="2">
    <location>
        <begin position="288"/>
        <end position="308"/>
    </location>
</feature>
<feature type="transmembrane region" description="Helical" evidence="2">
    <location>
        <begin position="320"/>
        <end position="340"/>
    </location>
</feature>
<feature type="transmembrane region" description="Helical" evidence="2">
    <location>
        <begin position="347"/>
        <end position="367"/>
    </location>
</feature>
<feature type="binding site" description="axial binding residue" evidence="2">
    <location>
        <position position="83"/>
    </location>
    <ligand>
        <name>heme b</name>
        <dbReference type="ChEBI" id="CHEBI:60344"/>
        <label>b562</label>
    </ligand>
    <ligandPart>
        <name>Fe</name>
        <dbReference type="ChEBI" id="CHEBI:18248"/>
    </ligandPart>
</feature>
<feature type="binding site" description="axial binding residue" evidence="2">
    <location>
        <position position="97"/>
    </location>
    <ligand>
        <name>heme b</name>
        <dbReference type="ChEBI" id="CHEBI:60344"/>
        <label>b566</label>
    </ligand>
    <ligandPart>
        <name>Fe</name>
        <dbReference type="ChEBI" id="CHEBI:18248"/>
    </ligandPart>
</feature>
<feature type="binding site" description="axial binding residue" evidence="2">
    <location>
        <position position="182"/>
    </location>
    <ligand>
        <name>heme b</name>
        <dbReference type="ChEBI" id="CHEBI:60344"/>
        <label>b562</label>
    </ligand>
    <ligandPart>
        <name>Fe</name>
        <dbReference type="ChEBI" id="CHEBI:18248"/>
    </ligandPart>
</feature>
<feature type="binding site" description="axial binding residue" evidence="2">
    <location>
        <position position="196"/>
    </location>
    <ligand>
        <name>heme b</name>
        <dbReference type="ChEBI" id="CHEBI:60344"/>
        <label>b566</label>
    </ligand>
    <ligandPart>
        <name>Fe</name>
        <dbReference type="ChEBI" id="CHEBI:18248"/>
    </ligandPart>
</feature>
<feature type="binding site" evidence="2">
    <location>
        <position position="201"/>
    </location>
    <ligand>
        <name>a ubiquinone</name>
        <dbReference type="ChEBI" id="CHEBI:16389"/>
    </ligand>
</feature>
<gene>
    <name type="primary">MT-CYB</name>
    <name type="synonym">COB</name>
    <name type="synonym">CYTB</name>
    <name type="synonym">MTCYB</name>
</gene>
<geneLocation type="mitochondrion"/>
<dbReference type="EMBL" id="AF272999">
    <property type="protein sequence ID" value="AAG00194.1"/>
    <property type="molecule type" value="Genomic_DNA"/>
</dbReference>
<dbReference type="SMR" id="Q9GBY4"/>
<dbReference type="GO" id="GO:0005743">
    <property type="term" value="C:mitochondrial inner membrane"/>
    <property type="evidence" value="ECO:0007669"/>
    <property type="project" value="UniProtKB-SubCell"/>
</dbReference>
<dbReference type="GO" id="GO:0045275">
    <property type="term" value="C:respiratory chain complex III"/>
    <property type="evidence" value="ECO:0007669"/>
    <property type="project" value="InterPro"/>
</dbReference>
<dbReference type="GO" id="GO:0046872">
    <property type="term" value="F:metal ion binding"/>
    <property type="evidence" value="ECO:0007669"/>
    <property type="project" value="UniProtKB-KW"/>
</dbReference>
<dbReference type="GO" id="GO:0008121">
    <property type="term" value="F:ubiquinol-cytochrome-c reductase activity"/>
    <property type="evidence" value="ECO:0007669"/>
    <property type="project" value="InterPro"/>
</dbReference>
<dbReference type="GO" id="GO:0006122">
    <property type="term" value="P:mitochondrial electron transport, ubiquinol to cytochrome c"/>
    <property type="evidence" value="ECO:0007669"/>
    <property type="project" value="TreeGrafter"/>
</dbReference>
<dbReference type="CDD" id="cd00290">
    <property type="entry name" value="cytochrome_b_C"/>
    <property type="match status" value="1"/>
</dbReference>
<dbReference type="CDD" id="cd00284">
    <property type="entry name" value="Cytochrome_b_N"/>
    <property type="match status" value="1"/>
</dbReference>
<dbReference type="FunFam" id="1.20.810.10:FF:000002">
    <property type="entry name" value="Cytochrome b"/>
    <property type="match status" value="1"/>
</dbReference>
<dbReference type="Gene3D" id="1.20.810.10">
    <property type="entry name" value="Cytochrome Bc1 Complex, Chain C"/>
    <property type="match status" value="1"/>
</dbReference>
<dbReference type="InterPro" id="IPR005798">
    <property type="entry name" value="Cyt_b/b6_C"/>
</dbReference>
<dbReference type="InterPro" id="IPR036150">
    <property type="entry name" value="Cyt_b/b6_C_sf"/>
</dbReference>
<dbReference type="InterPro" id="IPR005797">
    <property type="entry name" value="Cyt_b/b6_N"/>
</dbReference>
<dbReference type="InterPro" id="IPR027387">
    <property type="entry name" value="Cytb/b6-like_sf"/>
</dbReference>
<dbReference type="InterPro" id="IPR030689">
    <property type="entry name" value="Cytochrome_b"/>
</dbReference>
<dbReference type="InterPro" id="IPR048260">
    <property type="entry name" value="Cytochrome_b_C_euk/bac"/>
</dbReference>
<dbReference type="InterPro" id="IPR048259">
    <property type="entry name" value="Cytochrome_b_N_euk/bac"/>
</dbReference>
<dbReference type="InterPro" id="IPR016174">
    <property type="entry name" value="Di-haem_cyt_TM"/>
</dbReference>
<dbReference type="PANTHER" id="PTHR19271">
    <property type="entry name" value="CYTOCHROME B"/>
    <property type="match status" value="1"/>
</dbReference>
<dbReference type="PANTHER" id="PTHR19271:SF16">
    <property type="entry name" value="CYTOCHROME B"/>
    <property type="match status" value="1"/>
</dbReference>
<dbReference type="Pfam" id="PF00032">
    <property type="entry name" value="Cytochrom_B_C"/>
    <property type="match status" value="1"/>
</dbReference>
<dbReference type="Pfam" id="PF00033">
    <property type="entry name" value="Cytochrome_B"/>
    <property type="match status" value="1"/>
</dbReference>
<dbReference type="PIRSF" id="PIRSF038885">
    <property type="entry name" value="COB"/>
    <property type="match status" value="1"/>
</dbReference>
<dbReference type="SUPFAM" id="SSF81648">
    <property type="entry name" value="a domain/subunit of cytochrome bc1 complex (Ubiquinol-cytochrome c reductase)"/>
    <property type="match status" value="1"/>
</dbReference>
<dbReference type="SUPFAM" id="SSF81342">
    <property type="entry name" value="Transmembrane di-heme cytochromes"/>
    <property type="match status" value="1"/>
</dbReference>
<dbReference type="PROSITE" id="PS51003">
    <property type="entry name" value="CYTB_CTER"/>
    <property type="match status" value="1"/>
</dbReference>
<dbReference type="PROSITE" id="PS51002">
    <property type="entry name" value="CYTB_NTER"/>
    <property type="match status" value="1"/>
</dbReference>
<evidence type="ECO:0000250" key="1"/>
<evidence type="ECO:0000250" key="2">
    <source>
        <dbReference type="UniProtKB" id="P00157"/>
    </source>
</evidence>
<evidence type="ECO:0000255" key="3">
    <source>
        <dbReference type="PROSITE-ProRule" id="PRU00967"/>
    </source>
</evidence>
<evidence type="ECO:0000255" key="4">
    <source>
        <dbReference type="PROSITE-ProRule" id="PRU00968"/>
    </source>
</evidence>
<proteinExistence type="inferred from homology"/>
<organism>
    <name type="scientific">Ochotona erythrotis</name>
    <name type="common">Chinese red pika</name>
    <dbReference type="NCBI Taxonomy" id="130830"/>
    <lineage>
        <taxon>Eukaryota</taxon>
        <taxon>Metazoa</taxon>
        <taxon>Chordata</taxon>
        <taxon>Craniata</taxon>
        <taxon>Vertebrata</taxon>
        <taxon>Euteleostomi</taxon>
        <taxon>Mammalia</taxon>
        <taxon>Eutheria</taxon>
        <taxon>Euarchontoglires</taxon>
        <taxon>Glires</taxon>
        <taxon>Lagomorpha</taxon>
        <taxon>Ochotonidae</taxon>
        <taxon>Ochotona</taxon>
    </lineage>
</organism>
<name>CYB_OCHER</name>
<sequence length="379" mass="42818">MTNIRKTHPLMKIVNHSLIDLPAPSNISAWWNFGSLLGLCLGIQIITGLFLAMHYTSDTLTAFSSVTHICRDVNYGWIIRYMHANGASMFFICLFLHVGRGIYYGSYTYSETWNIGILLLFATMATAFMGYVLPWGQMSFWGATVITNLLSAIPYIGTDLVQWIWGGFSVDKATLTRFFAFHFILPFIIAALVMVHLLFLHETGSNNPTGIISDSDKIPFHPYYTIKDTLGFLLLISLLLTLVLFYPDLLGDPDNYTPANPLNTPPHIKPEWYFLFAYAILRSIPNKLGGVLALVLSIAILAVMPFLHTSKQRSMMFRPMSQTLFWILVADLLTLTWIGGQPVEHPFIIIGQLASFLYFLLILALMPMCSLIENKLLKW</sequence>
<protein>
    <recommendedName>
        <fullName>Cytochrome b</fullName>
    </recommendedName>
    <alternativeName>
        <fullName>Complex III subunit 3</fullName>
    </alternativeName>
    <alternativeName>
        <fullName>Complex III subunit III</fullName>
    </alternativeName>
    <alternativeName>
        <fullName>Cytochrome b-c1 complex subunit 3</fullName>
    </alternativeName>
    <alternativeName>
        <fullName>Ubiquinol-cytochrome-c reductase complex cytochrome b subunit</fullName>
    </alternativeName>
</protein>
<keyword id="KW-0249">Electron transport</keyword>
<keyword id="KW-0349">Heme</keyword>
<keyword id="KW-0408">Iron</keyword>
<keyword id="KW-0472">Membrane</keyword>
<keyword id="KW-0479">Metal-binding</keyword>
<keyword id="KW-0496">Mitochondrion</keyword>
<keyword id="KW-0999">Mitochondrion inner membrane</keyword>
<keyword id="KW-0679">Respiratory chain</keyword>
<keyword id="KW-0812">Transmembrane</keyword>
<keyword id="KW-1133">Transmembrane helix</keyword>
<keyword id="KW-0813">Transport</keyword>
<keyword id="KW-0830">Ubiquinone</keyword>
<accession>Q9GBY4</accession>
<reference key="1">
    <citation type="journal article" date="2000" name="Mol. Phylogenet. Evol.">
        <title>Molecular systematics of pikas (genus Ochotona) inferred from mitochondrial DNA sequences.</title>
        <authorList>
            <person name="Yu N."/>
            <person name="Zheng C."/>
            <person name="Zhang Y.P."/>
            <person name="Li W.H."/>
        </authorList>
    </citation>
    <scope>NUCLEOTIDE SEQUENCE [GENOMIC DNA]</scope>
</reference>
<comment type="function">
    <text evidence="2">Component of the ubiquinol-cytochrome c reductase complex (complex III or cytochrome b-c1 complex) that is part of the mitochondrial respiratory chain. The b-c1 complex mediates electron transfer from ubiquinol to cytochrome c. Contributes to the generation of a proton gradient across the mitochondrial membrane that is then used for ATP synthesis.</text>
</comment>
<comment type="cofactor">
    <cofactor evidence="2">
        <name>heme b</name>
        <dbReference type="ChEBI" id="CHEBI:60344"/>
    </cofactor>
    <text evidence="2">Binds 2 heme b groups non-covalently.</text>
</comment>
<comment type="subunit">
    <text evidence="2">The cytochrome bc1 complex contains 11 subunits: 3 respiratory subunits (MT-CYB, CYC1 and UQCRFS1), 2 core proteins (UQCRC1 and UQCRC2) and 6 low-molecular weight proteins (UQCRH/QCR6, UQCRB/QCR7, UQCRQ/QCR8, UQCR10/QCR9, UQCR11/QCR10 and a cleavage product of UQCRFS1). This cytochrome bc1 complex then forms a dimer.</text>
</comment>
<comment type="subcellular location">
    <subcellularLocation>
        <location evidence="2">Mitochondrion inner membrane</location>
        <topology evidence="2">Multi-pass membrane protein</topology>
    </subcellularLocation>
</comment>
<comment type="miscellaneous">
    <text evidence="1">Heme 1 (or BL or b562) is low-potential and absorbs at about 562 nm, and heme 2 (or BH or b566) is high-potential and absorbs at about 566 nm.</text>
</comment>
<comment type="similarity">
    <text evidence="3 4">Belongs to the cytochrome b family.</text>
</comment>
<comment type="caution">
    <text evidence="2">The full-length protein contains only eight transmembrane helices, not nine as predicted by bioinformatics tools.</text>
</comment>